<reference key="1">
    <citation type="journal article" date="2009" name="Appl. Environ. Microbiol.">
        <title>Complete genome sequence of the chemolithoautotrophic marine magnetotactic coccus strain MC-1.</title>
        <authorList>
            <person name="Schubbe S."/>
            <person name="Williams T.J."/>
            <person name="Xie G."/>
            <person name="Kiss H.E."/>
            <person name="Brettin T.S."/>
            <person name="Martinez D."/>
            <person name="Ross C.A."/>
            <person name="Schuler D."/>
            <person name="Cox B.L."/>
            <person name="Nealson K.H."/>
            <person name="Bazylinski D.A."/>
        </authorList>
    </citation>
    <scope>NUCLEOTIDE SEQUENCE [LARGE SCALE GENOMIC DNA]</scope>
    <source>
        <strain>ATCC BAA-1437 / JCM 17883 / MC-1</strain>
    </source>
</reference>
<sequence>MNAQREPSGLERLEQALDYRFTQSDLLQLALTHRSAPLDGSKAGEVVATTHNERLEFLGDSVLNLIVSHRLYKRFGEVPEGQLSQWRAMLVNTRSLSEVAKDLELGRYLRMGRGEAKSGGREKYSILGNALEALLGAIYLDGGFEAAERVVDRLFAHQVAGIEPEQQGKDYKTLLQEYLQARGEALPIYAVLSAEGPPHERVFVVSCHPREQLCGHGQGRSKREAEQHAAQQALELLIESENEHHD</sequence>
<dbReference type="EC" id="3.1.26.3" evidence="1"/>
<dbReference type="EMBL" id="CP000471">
    <property type="protein sequence ID" value="ABK43426.1"/>
    <property type="molecule type" value="Genomic_DNA"/>
</dbReference>
<dbReference type="RefSeq" id="WP_011712583.1">
    <property type="nucleotide sequence ID" value="NC_008576.1"/>
</dbReference>
<dbReference type="SMR" id="A0L633"/>
<dbReference type="STRING" id="156889.Mmc1_0907"/>
<dbReference type="KEGG" id="mgm:Mmc1_0907"/>
<dbReference type="eggNOG" id="COG0571">
    <property type="taxonomic scope" value="Bacteria"/>
</dbReference>
<dbReference type="HOGENOM" id="CLU_000907_1_3_5"/>
<dbReference type="OrthoDB" id="9805026at2"/>
<dbReference type="Proteomes" id="UP000002586">
    <property type="component" value="Chromosome"/>
</dbReference>
<dbReference type="GO" id="GO:0005737">
    <property type="term" value="C:cytoplasm"/>
    <property type="evidence" value="ECO:0007669"/>
    <property type="project" value="UniProtKB-SubCell"/>
</dbReference>
<dbReference type="GO" id="GO:0003725">
    <property type="term" value="F:double-stranded RNA binding"/>
    <property type="evidence" value="ECO:0007669"/>
    <property type="project" value="TreeGrafter"/>
</dbReference>
<dbReference type="GO" id="GO:0046872">
    <property type="term" value="F:metal ion binding"/>
    <property type="evidence" value="ECO:0007669"/>
    <property type="project" value="UniProtKB-KW"/>
</dbReference>
<dbReference type="GO" id="GO:0004525">
    <property type="term" value="F:ribonuclease III activity"/>
    <property type="evidence" value="ECO:0007669"/>
    <property type="project" value="UniProtKB-UniRule"/>
</dbReference>
<dbReference type="GO" id="GO:0019843">
    <property type="term" value="F:rRNA binding"/>
    <property type="evidence" value="ECO:0007669"/>
    <property type="project" value="UniProtKB-KW"/>
</dbReference>
<dbReference type="GO" id="GO:0006397">
    <property type="term" value="P:mRNA processing"/>
    <property type="evidence" value="ECO:0007669"/>
    <property type="project" value="UniProtKB-UniRule"/>
</dbReference>
<dbReference type="GO" id="GO:0010468">
    <property type="term" value="P:regulation of gene expression"/>
    <property type="evidence" value="ECO:0007669"/>
    <property type="project" value="TreeGrafter"/>
</dbReference>
<dbReference type="GO" id="GO:0006364">
    <property type="term" value="P:rRNA processing"/>
    <property type="evidence" value="ECO:0007669"/>
    <property type="project" value="UniProtKB-UniRule"/>
</dbReference>
<dbReference type="GO" id="GO:0008033">
    <property type="term" value="P:tRNA processing"/>
    <property type="evidence" value="ECO:0007669"/>
    <property type="project" value="UniProtKB-KW"/>
</dbReference>
<dbReference type="CDD" id="cd10845">
    <property type="entry name" value="DSRM_RNAse_III_family"/>
    <property type="match status" value="1"/>
</dbReference>
<dbReference type="CDD" id="cd00593">
    <property type="entry name" value="RIBOc"/>
    <property type="match status" value="1"/>
</dbReference>
<dbReference type="FunFam" id="1.10.1520.10:FF:000001">
    <property type="entry name" value="Ribonuclease 3"/>
    <property type="match status" value="1"/>
</dbReference>
<dbReference type="FunFam" id="3.30.160.20:FF:000003">
    <property type="entry name" value="Ribonuclease 3"/>
    <property type="match status" value="1"/>
</dbReference>
<dbReference type="Gene3D" id="3.30.160.20">
    <property type="match status" value="1"/>
</dbReference>
<dbReference type="Gene3D" id="1.10.1520.10">
    <property type="entry name" value="Ribonuclease III domain"/>
    <property type="match status" value="1"/>
</dbReference>
<dbReference type="HAMAP" id="MF_00104">
    <property type="entry name" value="RNase_III"/>
    <property type="match status" value="1"/>
</dbReference>
<dbReference type="InterPro" id="IPR014720">
    <property type="entry name" value="dsRBD_dom"/>
</dbReference>
<dbReference type="InterPro" id="IPR011907">
    <property type="entry name" value="RNase_III"/>
</dbReference>
<dbReference type="InterPro" id="IPR000999">
    <property type="entry name" value="RNase_III_dom"/>
</dbReference>
<dbReference type="InterPro" id="IPR036389">
    <property type="entry name" value="RNase_III_sf"/>
</dbReference>
<dbReference type="NCBIfam" id="TIGR02191">
    <property type="entry name" value="RNaseIII"/>
    <property type="match status" value="1"/>
</dbReference>
<dbReference type="PANTHER" id="PTHR11207:SF0">
    <property type="entry name" value="RIBONUCLEASE 3"/>
    <property type="match status" value="1"/>
</dbReference>
<dbReference type="PANTHER" id="PTHR11207">
    <property type="entry name" value="RIBONUCLEASE III"/>
    <property type="match status" value="1"/>
</dbReference>
<dbReference type="Pfam" id="PF00035">
    <property type="entry name" value="dsrm"/>
    <property type="match status" value="1"/>
</dbReference>
<dbReference type="Pfam" id="PF14622">
    <property type="entry name" value="Ribonucleas_3_3"/>
    <property type="match status" value="1"/>
</dbReference>
<dbReference type="SMART" id="SM00358">
    <property type="entry name" value="DSRM"/>
    <property type="match status" value="1"/>
</dbReference>
<dbReference type="SMART" id="SM00535">
    <property type="entry name" value="RIBOc"/>
    <property type="match status" value="1"/>
</dbReference>
<dbReference type="SUPFAM" id="SSF54768">
    <property type="entry name" value="dsRNA-binding domain-like"/>
    <property type="match status" value="1"/>
</dbReference>
<dbReference type="SUPFAM" id="SSF69065">
    <property type="entry name" value="RNase III domain-like"/>
    <property type="match status" value="1"/>
</dbReference>
<dbReference type="PROSITE" id="PS50137">
    <property type="entry name" value="DS_RBD"/>
    <property type="match status" value="1"/>
</dbReference>
<dbReference type="PROSITE" id="PS00517">
    <property type="entry name" value="RNASE_3_1"/>
    <property type="match status" value="1"/>
</dbReference>
<dbReference type="PROSITE" id="PS50142">
    <property type="entry name" value="RNASE_3_2"/>
    <property type="match status" value="1"/>
</dbReference>
<proteinExistence type="inferred from homology"/>
<feature type="chain" id="PRO_1000075777" description="Ribonuclease 3">
    <location>
        <begin position="1"/>
        <end position="246"/>
    </location>
</feature>
<feature type="domain" description="RNase III" evidence="1">
    <location>
        <begin position="10"/>
        <end position="143"/>
    </location>
</feature>
<feature type="domain" description="DRBM" evidence="1">
    <location>
        <begin position="170"/>
        <end position="239"/>
    </location>
</feature>
<feature type="active site" evidence="1">
    <location>
        <position position="60"/>
    </location>
</feature>
<feature type="active site" evidence="1">
    <location>
        <position position="132"/>
    </location>
</feature>
<feature type="binding site" evidence="1">
    <location>
        <position position="56"/>
    </location>
    <ligand>
        <name>Mg(2+)</name>
        <dbReference type="ChEBI" id="CHEBI:18420"/>
    </ligand>
</feature>
<feature type="binding site" evidence="1">
    <location>
        <position position="129"/>
    </location>
    <ligand>
        <name>Mg(2+)</name>
        <dbReference type="ChEBI" id="CHEBI:18420"/>
    </ligand>
</feature>
<feature type="binding site" evidence="1">
    <location>
        <position position="132"/>
    </location>
    <ligand>
        <name>Mg(2+)</name>
        <dbReference type="ChEBI" id="CHEBI:18420"/>
    </ligand>
</feature>
<name>RNC_MAGMM</name>
<comment type="function">
    <text evidence="1">Digests double-stranded RNA. Involved in the processing of primary rRNA transcript to yield the immediate precursors to the large and small rRNAs (23S and 16S). Processes some mRNAs, and tRNAs when they are encoded in the rRNA operon. Processes pre-crRNA and tracrRNA of type II CRISPR loci if present in the organism.</text>
</comment>
<comment type="catalytic activity">
    <reaction evidence="1">
        <text>Endonucleolytic cleavage to 5'-phosphomonoester.</text>
        <dbReference type="EC" id="3.1.26.3"/>
    </reaction>
</comment>
<comment type="cofactor">
    <cofactor evidence="1">
        <name>Mg(2+)</name>
        <dbReference type="ChEBI" id="CHEBI:18420"/>
    </cofactor>
</comment>
<comment type="subunit">
    <text evidence="1">Homodimer.</text>
</comment>
<comment type="subcellular location">
    <subcellularLocation>
        <location evidence="1">Cytoplasm</location>
    </subcellularLocation>
</comment>
<comment type="similarity">
    <text evidence="1">Belongs to the ribonuclease III family.</text>
</comment>
<keyword id="KW-0963">Cytoplasm</keyword>
<keyword id="KW-0255">Endonuclease</keyword>
<keyword id="KW-0378">Hydrolase</keyword>
<keyword id="KW-0460">Magnesium</keyword>
<keyword id="KW-0479">Metal-binding</keyword>
<keyword id="KW-0507">mRNA processing</keyword>
<keyword id="KW-0540">Nuclease</keyword>
<keyword id="KW-1185">Reference proteome</keyword>
<keyword id="KW-0694">RNA-binding</keyword>
<keyword id="KW-0698">rRNA processing</keyword>
<keyword id="KW-0699">rRNA-binding</keyword>
<keyword id="KW-0819">tRNA processing</keyword>
<gene>
    <name evidence="1" type="primary">rnc</name>
    <name type="ordered locus">Mmc1_0907</name>
</gene>
<evidence type="ECO:0000255" key="1">
    <source>
        <dbReference type="HAMAP-Rule" id="MF_00104"/>
    </source>
</evidence>
<organism>
    <name type="scientific">Magnetococcus marinus (strain ATCC BAA-1437 / JCM 17883 / MC-1)</name>
    <dbReference type="NCBI Taxonomy" id="156889"/>
    <lineage>
        <taxon>Bacteria</taxon>
        <taxon>Pseudomonadati</taxon>
        <taxon>Pseudomonadota</taxon>
        <taxon>Alphaproteobacteria</taxon>
        <taxon>Magnetococcales</taxon>
        <taxon>Magnetococcaceae</taxon>
        <taxon>Magnetococcus</taxon>
    </lineage>
</organism>
<accession>A0L633</accession>
<protein>
    <recommendedName>
        <fullName evidence="1">Ribonuclease 3</fullName>
        <ecNumber evidence="1">3.1.26.3</ecNumber>
    </recommendedName>
    <alternativeName>
        <fullName evidence="1">Ribonuclease III</fullName>
        <shortName evidence="1">RNase III</shortName>
    </alternativeName>
</protein>